<proteinExistence type="inferred from homology"/>
<feature type="signal peptide" evidence="2">
    <location>
        <begin position="1"/>
        <end position="21"/>
    </location>
</feature>
<feature type="chain" id="PRO_0000407509" description="Vacuolar protein sorting/targeting protein 10">
    <location>
        <begin position="22"/>
        <end position="1586"/>
    </location>
</feature>
<feature type="topological domain" description="Lumenal" evidence="2">
    <location>
        <begin position="22"/>
        <end position="1394"/>
    </location>
</feature>
<feature type="transmembrane region" description="Helical" evidence="2">
    <location>
        <begin position="1395"/>
        <end position="1415"/>
    </location>
</feature>
<feature type="topological domain" description="Cytoplasmic" evidence="2">
    <location>
        <begin position="1416"/>
        <end position="1586"/>
    </location>
</feature>
<feature type="repeat" description="BNR 1">
    <location>
        <begin position="450"/>
        <end position="460"/>
    </location>
</feature>
<feature type="repeat" description="BNR 2">
    <location>
        <begin position="496"/>
        <end position="507"/>
    </location>
</feature>
<feature type="repeat" description="BNR 3">
    <location>
        <begin position="792"/>
        <end position="801"/>
    </location>
</feature>
<feature type="repeat" description="BNR 4">
    <location>
        <begin position="846"/>
        <end position="856"/>
    </location>
</feature>
<feature type="repeat" description="BNR 5">
    <location>
        <begin position="1136"/>
        <end position="1146"/>
    </location>
</feature>
<feature type="repeat" description="BNR 6">
    <location>
        <begin position="1177"/>
        <end position="1187"/>
    </location>
</feature>
<feature type="region of interest" description="Disordered" evidence="3">
    <location>
        <begin position="692"/>
        <end position="711"/>
    </location>
</feature>
<feature type="region of interest" description="Disordered" evidence="3">
    <location>
        <begin position="1527"/>
        <end position="1586"/>
    </location>
</feature>
<feature type="compositionally biased region" description="Acidic residues" evidence="3">
    <location>
        <begin position="1540"/>
        <end position="1555"/>
    </location>
</feature>
<feature type="compositionally biased region" description="Acidic residues" evidence="3">
    <location>
        <begin position="1568"/>
        <end position="1577"/>
    </location>
</feature>
<feature type="glycosylation site" description="N-linked (GlcNAc...) asparagine" evidence="2">
    <location>
        <position position="1004"/>
    </location>
</feature>
<feature type="glycosylation site" description="N-linked (GlcNAc...) asparagine" evidence="2">
    <location>
        <position position="1300"/>
    </location>
</feature>
<protein>
    <recommendedName>
        <fullName>Vacuolar protein sorting/targeting protein 10</fullName>
    </recommendedName>
    <alternativeName>
        <fullName>Carboxypeptidase Y receptor</fullName>
        <shortName>CPY receptor</shortName>
    </alternativeName>
    <alternativeName>
        <fullName>Sortilin VPS10</fullName>
    </alternativeName>
    <alternativeName>
        <fullName>Vacuolar carboxypeptidase sorting receptor VPS10</fullName>
    </alternativeName>
</protein>
<name>VPS10_CANAW</name>
<reference key="1">
    <citation type="journal article" date="2009" name="Nature">
        <title>Evolution of pathogenicity and sexual reproduction in eight Candida genomes.</title>
        <authorList>
            <person name="Butler G."/>
            <person name="Rasmussen M.D."/>
            <person name="Lin M.F."/>
            <person name="Santos M.A.S."/>
            <person name="Sakthikumar S."/>
            <person name="Munro C.A."/>
            <person name="Rheinbay E."/>
            <person name="Grabherr M."/>
            <person name="Forche A."/>
            <person name="Reedy J.L."/>
            <person name="Agrafioti I."/>
            <person name="Arnaud M.B."/>
            <person name="Bates S."/>
            <person name="Brown A.J.P."/>
            <person name="Brunke S."/>
            <person name="Costanzo M.C."/>
            <person name="Fitzpatrick D.A."/>
            <person name="de Groot P.W.J."/>
            <person name="Harris D."/>
            <person name="Hoyer L.L."/>
            <person name="Hube B."/>
            <person name="Klis F.M."/>
            <person name="Kodira C."/>
            <person name="Lennard N."/>
            <person name="Logue M.E."/>
            <person name="Martin R."/>
            <person name="Neiman A.M."/>
            <person name="Nikolaou E."/>
            <person name="Quail M.A."/>
            <person name="Quinn J."/>
            <person name="Santos M.C."/>
            <person name="Schmitzberger F.F."/>
            <person name="Sherlock G."/>
            <person name="Shah P."/>
            <person name="Silverstein K.A.T."/>
            <person name="Skrzypek M.S."/>
            <person name="Soll D."/>
            <person name="Staggs R."/>
            <person name="Stansfield I."/>
            <person name="Stumpf M.P.H."/>
            <person name="Sudbery P.E."/>
            <person name="Srikantha T."/>
            <person name="Zeng Q."/>
            <person name="Berman J."/>
            <person name="Berriman M."/>
            <person name="Heitman J."/>
            <person name="Gow N.A.R."/>
            <person name="Lorenz M.C."/>
            <person name="Birren B.W."/>
            <person name="Kellis M."/>
            <person name="Cuomo C.A."/>
        </authorList>
    </citation>
    <scope>NUCLEOTIDE SEQUENCE [LARGE SCALE GENOMIC DNA]</scope>
    <source>
        <strain>WO-1</strain>
    </source>
</reference>
<evidence type="ECO:0000250" key="1"/>
<evidence type="ECO:0000255" key="2"/>
<evidence type="ECO:0000256" key="3">
    <source>
        <dbReference type="SAM" id="MobiDB-lite"/>
    </source>
</evidence>
<evidence type="ECO:0000305" key="4"/>
<sequence length="1586" mass="179334">MRNNWNWLIFLVPFILSLTTAYTPDISVVKNKSPAREIKYFDDSSNLLVLRDEHLLISKNDGKSFEEIPDIKDPIIYFEMDPTNKNRAFAMTLSQKQYITEDQGNKWRTFEIDIFNGEMASIPKITFNFENPNYLMISNYECPEGQRLNRNCKHRYFFTKDGFKSKPNKLPVDAHVCRFAKSTKTSKIGKSETIFCTVNQLNSYGHIVESHLYNSNDFFQNKNEIKIKPLDSSSGEIIDVKIEEDFMIVVSRMDKFNEKSLINAYVSRDGENFVRADLDIDIKYGVMSFLPSSVSSLFLTIMDFNSRAFQTASFYGSDSSGLHFTKLLDNVAGGNIQKIENIDGAWIANIGVDSNNPYDGDESLLDNLFGGTYAKSIVSKVSINDGKDWSLIKLNDNSCKIEDECSLHLWDFTELDGEGKFVTGPTPGILLGVGNKGKNLAHEFEKMKTYVSRDGGVTWNKALDFPAVFAFGDQGNVILAVPYNGKKKYEAAKHFYFSLDQGKSWEKVDLEHPIYPLSILTTIDGTSRKFIIGGIDDSRRAENEYIYSVDFTNAFDGKTCGDDDFEEFVARKSNDNGNDEPLCVYGHREKFRRRKQDAKCFVNKLFEDIKVIEDPCQCTEHDFECGPGFRLSEKESTNVCVPDRKQLTQLCQSKSEITLPNKVLVEGNKCNMGDKKLEDFVSQETLKCSDYVDNGGDGNGDEKNPNQGDSNQIEVHINDFEGKLSQYQYIAESKDNNAADNVVIKTMDDRLWISNNGGVSFVRVPISDKILGFYAGPIPGQITLITATNIIYVSDDGGATFIKRKVPTQPSPRVDRAIAFHSKNVERFIWFGEECESNGRCTSNAYITDDAGATFNKLMANVRTCDYVGAVLESGDHELIYCSGQNSLDNNNNNNKNKNKLALFSLKESSSEEPKKIFENIVGYAITGTYVVVATIDDKTDSLLSKVTVDGDIFADADFPHDLKVEPHQAFTVLDSSSKAVFMHVTTNEKPNFEYGQLLKSNSNGTYFVLTLDNVNRNTVGYVDFDKIDGLEGTIIANVVANAQANEGTKNLQTLISHNDGSEWDKLVPPTIDSEGIKYPCTGQSLNKCALHLHGFTERADYRDTFSSGSATGFLIGVGNVGEFLTPMDDPSTATFLSTDGGVTWKEIKKGVYMWEYGDQGTILVLVNAVENTDVLYYSLDEGQTWKEYKFSEYKVNIYDLATVPTDTARKFIIFAENPKDHRDIQTFTIDFTNIYPRQCQLNLDDPEHDDYEYWSPTHPIGGDKCIFGHESKYLRRAKGHTDCFIGSAPLSEGYKLEKNCSCTRRDYECDYNYVRDVNDNTCKLVKGMTSADRKTTMCSKENAFQYFESTGYRKIPLSTCKGGQQFDNWNPKPCPGKEKQFNEYYGREVKGHKLFFLIFIPLIIFLATVLFVYDRGIRRNGGFKRLGQIRLNDDDDDFNPIENDQIDVVVNKIVKGGVYTVAVLIATVKTIRKIDRMMLEKLGNVIFRRSPGRRNYVSVPNDLDEEEELFGDYQDNLDDELEDAVFNQDDNLVRTPFADDVEEEEEEREGEGEGEQSNPSDERLFDIDDNEDEDEQHEVNKPTTS</sequence>
<dbReference type="EMBL" id="CH672346">
    <property type="protein sequence ID" value="EEQ41997.1"/>
    <property type="molecule type" value="Genomic_DNA"/>
</dbReference>
<dbReference type="SMR" id="C4YG73"/>
<dbReference type="GlyCosmos" id="C4YG73">
    <property type="glycosylation" value="2 sites, No reported glycans"/>
</dbReference>
<dbReference type="PaxDb" id="5476-C4YG73"/>
<dbReference type="VEuPathDB" id="FungiDB:CAWG_00192"/>
<dbReference type="HOGENOM" id="CLU_000700_0_1_1"/>
<dbReference type="OMA" id="ECDYNYY"/>
<dbReference type="OrthoDB" id="7347at766764"/>
<dbReference type="Proteomes" id="UP000001429">
    <property type="component" value="Chromosome 1, Supercontig 1.1"/>
</dbReference>
<dbReference type="GO" id="GO:0005829">
    <property type="term" value="C:cytosol"/>
    <property type="evidence" value="ECO:0007669"/>
    <property type="project" value="GOC"/>
</dbReference>
<dbReference type="GO" id="GO:0005794">
    <property type="term" value="C:Golgi apparatus"/>
    <property type="evidence" value="ECO:0007669"/>
    <property type="project" value="UniProtKB-SubCell"/>
</dbReference>
<dbReference type="GO" id="GO:0016020">
    <property type="term" value="C:membrane"/>
    <property type="evidence" value="ECO:0007669"/>
    <property type="project" value="UniProtKB-KW"/>
</dbReference>
<dbReference type="GO" id="GO:0006895">
    <property type="term" value="P:Golgi to endosome transport"/>
    <property type="evidence" value="ECO:0007669"/>
    <property type="project" value="TreeGrafter"/>
</dbReference>
<dbReference type="GO" id="GO:0006896">
    <property type="term" value="P:Golgi to vacuole transport"/>
    <property type="evidence" value="ECO:0007669"/>
    <property type="project" value="TreeGrafter"/>
</dbReference>
<dbReference type="GO" id="GO:0006623">
    <property type="term" value="P:protein targeting to vacuole"/>
    <property type="evidence" value="ECO:0007669"/>
    <property type="project" value="TreeGrafter"/>
</dbReference>
<dbReference type="CDD" id="cd15482">
    <property type="entry name" value="Sialidase_non-viral"/>
    <property type="match status" value="1"/>
</dbReference>
<dbReference type="FunFam" id="3.30.60.270:FF:000005">
    <property type="entry name" value="Sortilin"/>
    <property type="match status" value="1"/>
</dbReference>
<dbReference type="FunFam" id="2.130.10.10:FF:003423">
    <property type="entry name" value="Vacuolar protein sorting/targeting protein 10"/>
    <property type="match status" value="1"/>
</dbReference>
<dbReference type="Gene3D" id="2.10.70.80">
    <property type="match status" value="2"/>
</dbReference>
<dbReference type="Gene3D" id="3.30.60.270">
    <property type="match status" value="1"/>
</dbReference>
<dbReference type="Gene3D" id="2.130.10.10">
    <property type="entry name" value="YVTN repeat-like/Quinoprotein amine dehydrogenase"/>
    <property type="match status" value="2"/>
</dbReference>
<dbReference type="InterPro" id="IPR031777">
    <property type="entry name" value="Sortilin_C"/>
</dbReference>
<dbReference type="InterPro" id="IPR031778">
    <property type="entry name" value="Sortilin_N"/>
</dbReference>
<dbReference type="InterPro" id="IPR006581">
    <property type="entry name" value="VPS10"/>
</dbReference>
<dbReference type="InterPro" id="IPR050310">
    <property type="entry name" value="VPS10-sortilin"/>
</dbReference>
<dbReference type="InterPro" id="IPR015943">
    <property type="entry name" value="WD40/YVTN_repeat-like_dom_sf"/>
</dbReference>
<dbReference type="PANTHER" id="PTHR12106">
    <property type="entry name" value="SORTILIN RELATED"/>
    <property type="match status" value="1"/>
</dbReference>
<dbReference type="PANTHER" id="PTHR12106:SF27">
    <property type="entry name" value="SORTILIN-RELATED RECEPTOR"/>
    <property type="match status" value="1"/>
</dbReference>
<dbReference type="Pfam" id="PF15902">
    <property type="entry name" value="Sortilin-Vps10"/>
    <property type="match status" value="2"/>
</dbReference>
<dbReference type="Pfam" id="PF15901">
    <property type="entry name" value="Sortilin_C"/>
    <property type="match status" value="2"/>
</dbReference>
<dbReference type="SMART" id="SM00602">
    <property type="entry name" value="VPS10"/>
    <property type="match status" value="2"/>
</dbReference>
<dbReference type="SUPFAM" id="SSF110296">
    <property type="entry name" value="Oligoxyloglucan reducing end-specific cellobiohydrolase"/>
    <property type="match status" value="2"/>
</dbReference>
<comment type="function">
    <text evidence="1">Functions as a sorting receptor in the Golgi compartment required for the intracellular sorting and delivery of soluble vacuolar proteins, like carboxypeptidase Y (CPY) and proteinase A. Executes multiple rounds of sorting by cycling between the late Golgi and a prevacuolar endosome-like compartment (By similarity).</text>
</comment>
<comment type="subcellular location">
    <subcellularLocation>
        <location evidence="1">Golgi apparatus</location>
        <location evidence="1">trans-Golgi network membrane</location>
        <topology evidence="1">Single-pass type I membrane protein</topology>
    </subcellularLocation>
    <subcellularLocation>
        <location evidence="1">Prevacuolar compartment membrane</location>
        <topology evidence="1">Single-pass type I membrane protein</topology>
    </subcellularLocation>
    <text evidence="1">Cycles between the Golgi apparatus and the prevacuolar compartment.</text>
</comment>
<comment type="similarity">
    <text evidence="4">Belongs to the VPS10-related sortilin family.</text>
</comment>
<accession>C4YG73</accession>
<gene>
    <name type="primary">VPS10</name>
    <name type="ORF">CAWG_00192</name>
</gene>
<organism>
    <name type="scientific">Candida albicans (strain WO-1)</name>
    <name type="common">Yeast</name>
    <dbReference type="NCBI Taxonomy" id="294748"/>
    <lineage>
        <taxon>Eukaryota</taxon>
        <taxon>Fungi</taxon>
        <taxon>Dikarya</taxon>
        <taxon>Ascomycota</taxon>
        <taxon>Saccharomycotina</taxon>
        <taxon>Pichiomycetes</taxon>
        <taxon>Debaryomycetaceae</taxon>
        <taxon>Candida/Lodderomyces clade</taxon>
        <taxon>Candida</taxon>
    </lineage>
</organism>
<keyword id="KW-0325">Glycoprotein</keyword>
<keyword id="KW-0333">Golgi apparatus</keyword>
<keyword id="KW-0472">Membrane</keyword>
<keyword id="KW-0653">Protein transport</keyword>
<keyword id="KW-0675">Receptor</keyword>
<keyword id="KW-0677">Repeat</keyword>
<keyword id="KW-0732">Signal</keyword>
<keyword id="KW-0812">Transmembrane</keyword>
<keyword id="KW-1133">Transmembrane helix</keyword>
<keyword id="KW-0813">Transport</keyword>